<proteinExistence type="inferred from homology"/>
<protein>
    <recommendedName>
        <fullName evidence="1">3-methyl-2-oxobutanoate hydroxymethyltransferase</fullName>
        <ecNumber evidence="1">2.1.2.11</ecNumber>
    </recommendedName>
    <alternativeName>
        <fullName evidence="1">Ketopantoate hydroxymethyltransferase</fullName>
        <shortName evidence="1">KPHMT</shortName>
    </alternativeName>
</protein>
<name>PANB_SULDN</name>
<sequence length="263" mass="28421">MAKKMTITSIKKSKGVHPLVMITAYDALFARLLEPSADMILVGDSLNMSFAGRDDTLSATLSQMIYHTNAVAKGAKNSFIICDMPFGTYTNRDDALKNSIKVFQESSADALKIEGGEDKAEIISHLCSNGIAVCGHIGLLPQAFRSEGGYKVKGKTDEERIQLIRDAKAIEKAGAFCMVIEGVKADVAAQVAASVKIPVIGIGAGRDVDGQVLVFSDMLGLFEEFTPKFVKKYLDGASLVKEALKSYADEVKTRAFPQDIHTY</sequence>
<feature type="chain" id="PRO_0000297402" description="3-methyl-2-oxobutanoate hydroxymethyltransferase">
    <location>
        <begin position="1"/>
        <end position="263"/>
    </location>
</feature>
<feature type="active site" description="Proton acceptor" evidence="1">
    <location>
        <position position="181"/>
    </location>
</feature>
<feature type="binding site" evidence="1">
    <location>
        <begin position="44"/>
        <end position="45"/>
    </location>
    <ligand>
        <name>3-methyl-2-oxobutanoate</name>
        <dbReference type="ChEBI" id="CHEBI:11851"/>
    </ligand>
</feature>
<feature type="binding site" evidence="1">
    <location>
        <position position="44"/>
    </location>
    <ligand>
        <name>Mg(2+)</name>
        <dbReference type="ChEBI" id="CHEBI:18420"/>
    </ligand>
</feature>
<feature type="binding site" evidence="1">
    <location>
        <position position="83"/>
    </location>
    <ligand>
        <name>3-methyl-2-oxobutanoate</name>
        <dbReference type="ChEBI" id="CHEBI:11851"/>
    </ligand>
</feature>
<feature type="binding site" evidence="1">
    <location>
        <position position="83"/>
    </location>
    <ligand>
        <name>Mg(2+)</name>
        <dbReference type="ChEBI" id="CHEBI:18420"/>
    </ligand>
</feature>
<feature type="binding site" evidence="1">
    <location>
        <position position="112"/>
    </location>
    <ligand>
        <name>3-methyl-2-oxobutanoate</name>
        <dbReference type="ChEBI" id="CHEBI:11851"/>
    </ligand>
</feature>
<feature type="binding site" evidence="1">
    <location>
        <position position="114"/>
    </location>
    <ligand>
        <name>Mg(2+)</name>
        <dbReference type="ChEBI" id="CHEBI:18420"/>
    </ligand>
</feature>
<gene>
    <name evidence="1" type="primary">panB</name>
    <name type="ordered locus">Suden_1679</name>
</gene>
<keyword id="KW-0963">Cytoplasm</keyword>
<keyword id="KW-0460">Magnesium</keyword>
<keyword id="KW-0479">Metal-binding</keyword>
<keyword id="KW-0566">Pantothenate biosynthesis</keyword>
<keyword id="KW-1185">Reference proteome</keyword>
<keyword id="KW-0808">Transferase</keyword>
<organism>
    <name type="scientific">Sulfurimonas denitrificans (strain ATCC 33889 / DSM 1251)</name>
    <name type="common">Thiomicrospira denitrificans (strain ATCC 33889 / DSM 1251)</name>
    <dbReference type="NCBI Taxonomy" id="326298"/>
    <lineage>
        <taxon>Bacteria</taxon>
        <taxon>Pseudomonadati</taxon>
        <taxon>Campylobacterota</taxon>
        <taxon>Epsilonproteobacteria</taxon>
        <taxon>Campylobacterales</taxon>
        <taxon>Sulfurimonadaceae</taxon>
        <taxon>Sulfurimonas</taxon>
    </lineage>
</organism>
<accession>Q30PX5</accession>
<evidence type="ECO:0000255" key="1">
    <source>
        <dbReference type="HAMAP-Rule" id="MF_00156"/>
    </source>
</evidence>
<reference key="1">
    <citation type="journal article" date="2008" name="Appl. Environ. Microbiol.">
        <title>Genome of the epsilonproteobacterial chemolithoautotroph Sulfurimonas denitrificans.</title>
        <authorList>
            <person name="Sievert S.M."/>
            <person name="Scott K.M."/>
            <person name="Klotz M.G."/>
            <person name="Chain P.S.G."/>
            <person name="Hauser L.J."/>
            <person name="Hemp J."/>
            <person name="Huegler M."/>
            <person name="Land M."/>
            <person name="Lapidus A."/>
            <person name="Larimer F.W."/>
            <person name="Lucas S."/>
            <person name="Malfatti S.A."/>
            <person name="Meyer F."/>
            <person name="Paulsen I.T."/>
            <person name="Ren Q."/>
            <person name="Simon J."/>
            <person name="Bailey K."/>
            <person name="Diaz E."/>
            <person name="Fitzpatrick K.A."/>
            <person name="Glover B."/>
            <person name="Gwatney N."/>
            <person name="Korajkic A."/>
            <person name="Long A."/>
            <person name="Mobberley J.M."/>
            <person name="Pantry S.N."/>
            <person name="Pazder G."/>
            <person name="Peterson S."/>
            <person name="Quintanilla J.D."/>
            <person name="Sprinkle R."/>
            <person name="Stephens J."/>
            <person name="Thomas P."/>
            <person name="Vaughn R."/>
            <person name="Weber M.J."/>
            <person name="Wooten L.L."/>
        </authorList>
    </citation>
    <scope>NUCLEOTIDE SEQUENCE [LARGE SCALE GENOMIC DNA]</scope>
    <source>
        <strain>ATCC 33889 / DSM 1251</strain>
    </source>
</reference>
<dbReference type="EC" id="2.1.2.11" evidence="1"/>
<dbReference type="EMBL" id="CP000153">
    <property type="protein sequence ID" value="ABB44956.1"/>
    <property type="molecule type" value="Genomic_DNA"/>
</dbReference>
<dbReference type="RefSeq" id="WP_011373297.1">
    <property type="nucleotide sequence ID" value="NC_007575.1"/>
</dbReference>
<dbReference type="SMR" id="Q30PX5"/>
<dbReference type="STRING" id="326298.Suden_1679"/>
<dbReference type="KEGG" id="tdn:Suden_1679"/>
<dbReference type="eggNOG" id="COG0413">
    <property type="taxonomic scope" value="Bacteria"/>
</dbReference>
<dbReference type="HOGENOM" id="CLU_036645_1_0_7"/>
<dbReference type="OrthoDB" id="9781789at2"/>
<dbReference type="UniPathway" id="UPA00028">
    <property type="reaction ID" value="UER00003"/>
</dbReference>
<dbReference type="Proteomes" id="UP000002714">
    <property type="component" value="Chromosome"/>
</dbReference>
<dbReference type="GO" id="GO:0005737">
    <property type="term" value="C:cytoplasm"/>
    <property type="evidence" value="ECO:0007669"/>
    <property type="project" value="UniProtKB-SubCell"/>
</dbReference>
<dbReference type="GO" id="GO:0003864">
    <property type="term" value="F:3-methyl-2-oxobutanoate hydroxymethyltransferase activity"/>
    <property type="evidence" value="ECO:0007669"/>
    <property type="project" value="UniProtKB-UniRule"/>
</dbReference>
<dbReference type="GO" id="GO:0000287">
    <property type="term" value="F:magnesium ion binding"/>
    <property type="evidence" value="ECO:0007669"/>
    <property type="project" value="TreeGrafter"/>
</dbReference>
<dbReference type="GO" id="GO:0015940">
    <property type="term" value="P:pantothenate biosynthetic process"/>
    <property type="evidence" value="ECO:0007669"/>
    <property type="project" value="UniProtKB-UniRule"/>
</dbReference>
<dbReference type="CDD" id="cd06557">
    <property type="entry name" value="KPHMT-like"/>
    <property type="match status" value="1"/>
</dbReference>
<dbReference type="FunFam" id="3.20.20.60:FF:000003">
    <property type="entry name" value="3-methyl-2-oxobutanoate hydroxymethyltransferase"/>
    <property type="match status" value="1"/>
</dbReference>
<dbReference type="Gene3D" id="3.20.20.60">
    <property type="entry name" value="Phosphoenolpyruvate-binding domains"/>
    <property type="match status" value="1"/>
</dbReference>
<dbReference type="HAMAP" id="MF_00156">
    <property type="entry name" value="PanB"/>
    <property type="match status" value="1"/>
</dbReference>
<dbReference type="InterPro" id="IPR003700">
    <property type="entry name" value="Pantoate_hydroxy_MeTrfase"/>
</dbReference>
<dbReference type="InterPro" id="IPR015813">
    <property type="entry name" value="Pyrv/PenolPyrv_kinase-like_dom"/>
</dbReference>
<dbReference type="InterPro" id="IPR040442">
    <property type="entry name" value="Pyrv_kinase-like_dom_sf"/>
</dbReference>
<dbReference type="NCBIfam" id="TIGR00222">
    <property type="entry name" value="panB"/>
    <property type="match status" value="1"/>
</dbReference>
<dbReference type="NCBIfam" id="NF001452">
    <property type="entry name" value="PRK00311.1"/>
    <property type="match status" value="1"/>
</dbReference>
<dbReference type="PANTHER" id="PTHR20881">
    <property type="entry name" value="3-METHYL-2-OXOBUTANOATE HYDROXYMETHYLTRANSFERASE"/>
    <property type="match status" value="1"/>
</dbReference>
<dbReference type="PANTHER" id="PTHR20881:SF0">
    <property type="entry name" value="3-METHYL-2-OXOBUTANOATE HYDROXYMETHYLTRANSFERASE"/>
    <property type="match status" value="1"/>
</dbReference>
<dbReference type="Pfam" id="PF02548">
    <property type="entry name" value="Pantoate_transf"/>
    <property type="match status" value="1"/>
</dbReference>
<dbReference type="PIRSF" id="PIRSF000388">
    <property type="entry name" value="Pantoate_hydroxy_MeTrfase"/>
    <property type="match status" value="1"/>
</dbReference>
<dbReference type="SUPFAM" id="SSF51621">
    <property type="entry name" value="Phosphoenolpyruvate/pyruvate domain"/>
    <property type="match status" value="1"/>
</dbReference>
<comment type="function">
    <text evidence="1">Catalyzes the reversible reaction in which hydroxymethyl group from 5,10-methylenetetrahydrofolate is transferred onto alpha-ketoisovalerate to form ketopantoate.</text>
</comment>
<comment type="catalytic activity">
    <reaction evidence="1">
        <text>3-methyl-2-oxobutanoate + (6R)-5,10-methylene-5,6,7,8-tetrahydrofolate + H2O = 2-dehydropantoate + (6S)-5,6,7,8-tetrahydrofolate</text>
        <dbReference type="Rhea" id="RHEA:11824"/>
        <dbReference type="ChEBI" id="CHEBI:11561"/>
        <dbReference type="ChEBI" id="CHEBI:11851"/>
        <dbReference type="ChEBI" id="CHEBI:15377"/>
        <dbReference type="ChEBI" id="CHEBI:15636"/>
        <dbReference type="ChEBI" id="CHEBI:57453"/>
        <dbReference type="EC" id="2.1.2.11"/>
    </reaction>
</comment>
<comment type="cofactor">
    <cofactor evidence="1">
        <name>Mg(2+)</name>
        <dbReference type="ChEBI" id="CHEBI:18420"/>
    </cofactor>
    <text evidence="1">Binds 1 Mg(2+) ion per subunit.</text>
</comment>
<comment type="pathway">
    <text evidence="1">Cofactor biosynthesis; (R)-pantothenate biosynthesis; (R)-pantoate from 3-methyl-2-oxobutanoate: step 1/2.</text>
</comment>
<comment type="subunit">
    <text evidence="1">Homodecamer; pentamer of dimers.</text>
</comment>
<comment type="subcellular location">
    <subcellularLocation>
        <location evidence="1">Cytoplasm</location>
    </subcellularLocation>
</comment>
<comment type="similarity">
    <text evidence="1">Belongs to the PanB family.</text>
</comment>